<name>NU5C_MAIZE</name>
<dbReference type="EC" id="7.1.1.-"/>
<dbReference type="EMBL" id="X86563">
    <property type="protein sequence ID" value="CAA60346.1"/>
    <property type="molecule type" value="Genomic_DNA"/>
</dbReference>
<dbReference type="EMBL" id="U21985">
    <property type="protein sequence ID" value="AAA64703.1"/>
    <property type="molecule type" value="Genomic_DNA"/>
</dbReference>
<dbReference type="PIR" id="S58612">
    <property type="entry name" value="S58612"/>
</dbReference>
<dbReference type="RefSeq" id="NP_043084.1">
    <property type="nucleotide sequence ID" value="NC_001666.2"/>
</dbReference>
<dbReference type="SMR" id="P46620"/>
<dbReference type="FunCoup" id="P46620">
    <property type="interactions" value="6"/>
</dbReference>
<dbReference type="STRING" id="4577.P46620"/>
<dbReference type="PaxDb" id="4577-GRMZM5G894515_P01"/>
<dbReference type="GeneID" id="845185"/>
<dbReference type="KEGG" id="zma:845185"/>
<dbReference type="MaizeGDB" id="107782"/>
<dbReference type="eggNOG" id="KOG4668">
    <property type="taxonomic scope" value="Eukaryota"/>
</dbReference>
<dbReference type="HOGENOM" id="CLU_007100_6_1_1"/>
<dbReference type="InParanoid" id="P46620"/>
<dbReference type="OMA" id="WEKLINF"/>
<dbReference type="OrthoDB" id="1890356at2759"/>
<dbReference type="Proteomes" id="UP000007305">
    <property type="component" value="Chloroplast"/>
</dbReference>
<dbReference type="GO" id="GO:0009535">
    <property type="term" value="C:chloroplast thylakoid membrane"/>
    <property type="evidence" value="ECO:0007669"/>
    <property type="project" value="UniProtKB-SubCell"/>
</dbReference>
<dbReference type="GO" id="GO:0008137">
    <property type="term" value="F:NADH dehydrogenase (ubiquinone) activity"/>
    <property type="evidence" value="ECO:0007669"/>
    <property type="project" value="InterPro"/>
</dbReference>
<dbReference type="GO" id="GO:0048038">
    <property type="term" value="F:quinone binding"/>
    <property type="evidence" value="ECO:0007669"/>
    <property type="project" value="UniProtKB-KW"/>
</dbReference>
<dbReference type="GO" id="GO:0042773">
    <property type="term" value="P:ATP synthesis coupled electron transport"/>
    <property type="evidence" value="ECO:0007669"/>
    <property type="project" value="InterPro"/>
</dbReference>
<dbReference type="GO" id="GO:0015990">
    <property type="term" value="P:electron transport coupled proton transport"/>
    <property type="evidence" value="ECO:0000318"/>
    <property type="project" value="GO_Central"/>
</dbReference>
<dbReference type="Gene3D" id="1.20.5.2700">
    <property type="match status" value="1"/>
</dbReference>
<dbReference type="InterPro" id="IPR002128">
    <property type="entry name" value="NADH_UbQ_OxRdtase_chlpt_su5_C"/>
</dbReference>
<dbReference type="InterPro" id="IPR018393">
    <property type="entry name" value="NADHpl_OxRdtase_5_subgr"/>
</dbReference>
<dbReference type="InterPro" id="IPR001750">
    <property type="entry name" value="ND/Mrp_TM"/>
</dbReference>
<dbReference type="InterPro" id="IPR003945">
    <property type="entry name" value="NU5C-like"/>
</dbReference>
<dbReference type="InterPro" id="IPR001516">
    <property type="entry name" value="Proton_antipo_N"/>
</dbReference>
<dbReference type="NCBIfam" id="TIGR01974">
    <property type="entry name" value="NDH_I_L"/>
    <property type="match status" value="1"/>
</dbReference>
<dbReference type="NCBIfam" id="NF005141">
    <property type="entry name" value="PRK06590.1"/>
    <property type="match status" value="1"/>
</dbReference>
<dbReference type="PANTHER" id="PTHR42829">
    <property type="entry name" value="NADH-UBIQUINONE OXIDOREDUCTASE CHAIN 5"/>
    <property type="match status" value="1"/>
</dbReference>
<dbReference type="PANTHER" id="PTHR42829:SF2">
    <property type="entry name" value="NADH-UBIQUINONE OXIDOREDUCTASE CHAIN 5"/>
    <property type="match status" value="1"/>
</dbReference>
<dbReference type="Pfam" id="PF01010">
    <property type="entry name" value="Proton_antipo_C"/>
    <property type="match status" value="1"/>
</dbReference>
<dbReference type="Pfam" id="PF00361">
    <property type="entry name" value="Proton_antipo_M"/>
    <property type="match status" value="1"/>
</dbReference>
<dbReference type="Pfam" id="PF00662">
    <property type="entry name" value="Proton_antipo_N"/>
    <property type="match status" value="1"/>
</dbReference>
<dbReference type="PRINTS" id="PR01434">
    <property type="entry name" value="NADHDHGNASE5"/>
</dbReference>
<dbReference type="PRINTS" id="PR01435">
    <property type="entry name" value="NPOXDRDTASE5"/>
</dbReference>
<sequence>MEHTYQYAWVIPLLPLPVIMSMGFGLFLIPTATKNLRRIWAFPSILLLSIAMVFSLHLSIQQINGSSIYQYLWSWTINNDFSLEFGYLVDPLTSIMLILITTVGILVLIYSDDYMSHDEGYLRFFVYISFFNTSMLGLVTSSNLIQIYFFWELVGMCSYLLIGFWFTRPIAASACQKAFVTNRVGDFGLLLGILGFFWITGSLEFRDLFKIANNWIPNNGINSLLTTLCAFLLFLGAVAKSAQFPLHVWLPDAMEGPTPISALIHAATMVAAGIFLLARLLPLFISLPWIMSFISLIGTITLFLGATLALAQRDIKRSLAYSTMSQLGYMMLALGIGSYQAALFHLITHAYSKALLFLGSGSVIHSMEPLVGYSPDKSQNMVLMGGLRKYVPITRTTFLCGTLSLCGIPPLACFWSKDEILSNSWLYSPFFGIIASFTAGLTAFYMFRIYLLTFDGYLRVHFQNYSSTKEGSLYSISLWGKSISKGVNRDFVLSTMKSGVSFFSQNIPKIPANTRNKIGSFSTPFGAKNTFVYPHETGNTMLFPLLILLLFTLFIGSIGIHFDNGVKDNRILELTILSKWLTPSINLFQENSNSSINSYEFLTNAISSVSLAIFGLFIAYIFYGSAYSFFQNLNFQNSLVKKNPKKSFLDEVKKKIYSWSYNRGYIDFFYTRVFILGIRKLAELTHFFDKGVIDGITNGVGLAGFCIGEEIKYVGGGRISSYLFFFLCYVSLFLFFIP</sequence>
<gene>
    <name type="primary">ndhF</name>
    <name type="synonym">ndh5</name>
</gene>
<accession>P46620</accession>
<keyword id="KW-0150">Chloroplast</keyword>
<keyword id="KW-0472">Membrane</keyword>
<keyword id="KW-0520">NAD</keyword>
<keyword id="KW-0521">NADP</keyword>
<keyword id="KW-0934">Plastid</keyword>
<keyword id="KW-0618">Plastoquinone</keyword>
<keyword id="KW-0874">Quinone</keyword>
<keyword id="KW-1185">Reference proteome</keyword>
<keyword id="KW-0793">Thylakoid</keyword>
<keyword id="KW-1278">Translocase</keyword>
<keyword id="KW-0812">Transmembrane</keyword>
<keyword id="KW-1133">Transmembrane helix</keyword>
<keyword id="KW-0813">Transport</keyword>
<protein>
    <recommendedName>
        <fullName>NAD(P)H-quinone oxidoreductase subunit 5, chloroplastic</fullName>
        <ecNumber>7.1.1.-</ecNumber>
    </recommendedName>
    <alternativeName>
        <fullName>NAD(P)H dehydrogenase subunit 5</fullName>
    </alternativeName>
    <alternativeName>
        <fullName>NADH-plastoquinone oxidoreductase subunit 5</fullName>
    </alternativeName>
</protein>
<organism>
    <name type="scientific">Zea mays</name>
    <name type="common">Maize</name>
    <dbReference type="NCBI Taxonomy" id="4577"/>
    <lineage>
        <taxon>Eukaryota</taxon>
        <taxon>Viridiplantae</taxon>
        <taxon>Streptophyta</taxon>
        <taxon>Embryophyta</taxon>
        <taxon>Tracheophyta</taxon>
        <taxon>Spermatophyta</taxon>
        <taxon>Magnoliopsida</taxon>
        <taxon>Liliopsida</taxon>
        <taxon>Poales</taxon>
        <taxon>Poaceae</taxon>
        <taxon>PACMAD clade</taxon>
        <taxon>Panicoideae</taxon>
        <taxon>Andropogonodae</taxon>
        <taxon>Andropogoneae</taxon>
        <taxon>Tripsacinae</taxon>
        <taxon>Zea</taxon>
    </lineage>
</organism>
<proteinExistence type="inferred from homology"/>
<reference key="1">
    <citation type="journal article" date="1995" name="J. Mol. Biol.">
        <title>Complete sequence of the maize chloroplast genome: gene content, hotspots of divergence and fine tuning of genetic information by transcript editing.</title>
        <authorList>
            <person name="Maier R.M."/>
            <person name="Neckermann K."/>
            <person name="Igloi G.L."/>
            <person name="Koessel H."/>
        </authorList>
    </citation>
    <scope>NUCLEOTIDE SEQUENCE [LARGE SCALE GENOMIC DNA]</scope>
    <source>
        <strain>cv. B73</strain>
    </source>
</reference>
<reference key="2">
    <citation type="submission" date="1995-02" db="EMBL/GenBank/DDBJ databases">
        <authorList>
            <person name="Clark L.G."/>
            <person name="Zhang W."/>
            <person name="Wendel J.F."/>
        </authorList>
    </citation>
    <scope>NUCLEOTIDE SEQUENCE [GENOMIC DNA] OF 9-709</scope>
    <source>
        <tissue>Leaf</tissue>
    </source>
</reference>
<evidence type="ECO:0000250" key="1"/>
<evidence type="ECO:0000255" key="2"/>
<evidence type="ECO:0000305" key="3"/>
<geneLocation type="chloroplast"/>
<feature type="chain" id="PRO_0000118191" description="NAD(P)H-quinone oxidoreductase subunit 5, chloroplastic">
    <location>
        <begin position="1"/>
        <end position="738"/>
    </location>
</feature>
<feature type="transmembrane region" description="Helical" evidence="2">
    <location>
        <begin position="9"/>
        <end position="29"/>
    </location>
</feature>
<feature type="transmembrane region" description="Helical" evidence="2">
    <location>
        <begin position="39"/>
        <end position="59"/>
    </location>
</feature>
<feature type="transmembrane region" description="Helical" evidence="2">
    <location>
        <begin position="89"/>
        <end position="109"/>
    </location>
</feature>
<feature type="transmembrane region" description="Helical" evidence="2">
    <location>
        <begin position="125"/>
        <end position="145"/>
    </location>
</feature>
<feature type="transmembrane region" description="Helical" evidence="2">
    <location>
        <begin position="147"/>
        <end position="167"/>
    </location>
</feature>
<feature type="transmembrane region" description="Helical" evidence="2">
    <location>
        <begin position="185"/>
        <end position="205"/>
    </location>
</feature>
<feature type="transmembrane region" description="Helical" evidence="2">
    <location>
        <begin position="219"/>
        <end position="239"/>
    </location>
</feature>
<feature type="transmembrane region" description="Helical" evidence="2">
    <location>
        <begin position="258"/>
        <end position="278"/>
    </location>
</feature>
<feature type="transmembrane region" description="Helical" evidence="2">
    <location>
        <begin position="280"/>
        <end position="300"/>
    </location>
</feature>
<feature type="transmembrane region" description="Helical" evidence="2">
    <location>
        <begin position="327"/>
        <end position="347"/>
    </location>
</feature>
<feature type="transmembrane region" description="Helical" evidence="2">
    <location>
        <begin position="354"/>
        <end position="374"/>
    </location>
</feature>
<feature type="transmembrane region" description="Helical" evidence="2">
    <location>
        <begin position="396"/>
        <end position="416"/>
    </location>
</feature>
<feature type="transmembrane region" description="Helical" evidence="2">
    <location>
        <begin position="425"/>
        <end position="445"/>
    </location>
</feature>
<feature type="transmembrane region" description="Helical" evidence="2">
    <location>
        <begin position="542"/>
        <end position="562"/>
    </location>
</feature>
<feature type="transmembrane region" description="Helical" evidence="2">
    <location>
        <begin position="610"/>
        <end position="630"/>
    </location>
</feature>
<feature type="transmembrane region" description="Helical" evidence="2">
    <location>
        <begin position="691"/>
        <end position="711"/>
    </location>
</feature>
<feature type="transmembrane region" description="Helical" evidence="2">
    <location>
        <begin position="717"/>
        <end position="737"/>
    </location>
</feature>
<feature type="sequence conflict" description="In Ref. 2; AAA64703." evidence="3" ref="2">
    <location>
        <position position="268"/>
    </location>
</feature>
<feature type="sequence conflict" description="In Ref. 2; AAA64703." evidence="3" ref="2">
    <original>W</original>
    <variation>L</variation>
    <location>
        <position position="289"/>
    </location>
</feature>
<feature type="sequence conflict" description="In Ref. 2; AAA64703." evidence="3" ref="2">
    <original>R</original>
    <variation>G</variation>
    <location>
        <position position="570"/>
    </location>
</feature>
<feature type="sequence conflict" description="In Ref. 2; AAA64703." evidence="3" ref="2">
    <original>K</original>
    <variation>R</variation>
    <location>
        <position position="680"/>
    </location>
</feature>
<comment type="function">
    <text evidence="1">NDH shuttles electrons from NAD(P)H:plastoquinone, via FMN and iron-sulfur (Fe-S) centers, to quinones in the photosynthetic chain and possibly in a chloroplast respiratory chain. The immediate electron acceptor for the enzyme in this species is believed to be plastoquinone. Couples the redox reaction to proton translocation, and thus conserves the redox energy in a proton gradient (By similarity).</text>
</comment>
<comment type="catalytic activity">
    <reaction>
        <text>a plastoquinone + NADH + (n+1) H(+)(in) = a plastoquinol + NAD(+) + n H(+)(out)</text>
        <dbReference type="Rhea" id="RHEA:42608"/>
        <dbReference type="Rhea" id="RHEA-COMP:9561"/>
        <dbReference type="Rhea" id="RHEA-COMP:9562"/>
        <dbReference type="ChEBI" id="CHEBI:15378"/>
        <dbReference type="ChEBI" id="CHEBI:17757"/>
        <dbReference type="ChEBI" id="CHEBI:57540"/>
        <dbReference type="ChEBI" id="CHEBI:57945"/>
        <dbReference type="ChEBI" id="CHEBI:62192"/>
    </reaction>
</comment>
<comment type="catalytic activity">
    <reaction>
        <text>a plastoquinone + NADPH + (n+1) H(+)(in) = a plastoquinol + NADP(+) + n H(+)(out)</text>
        <dbReference type="Rhea" id="RHEA:42612"/>
        <dbReference type="Rhea" id="RHEA-COMP:9561"/>
        <dbReference type="Rhea" id="RHEA-COMP:9562"/>
        <dbReference type="ChEBI" id="CHEBI:15378"/>
        <dbReference type="ChEBI" id="CHEBI:17757"/>
        <dbReference type="ChEBI" id="CHEBI:57783"/>
        <dbReference type="ChEBI" id="CHEBI:58349"/>
        <dbReference type="ChEBI" id="CHEBI:62192"/>
    </reaction>
</comment>
<comment type="subunit">
    <text evidence="1">NDH is composed of at least 16 different subunits, 5 of which are encoded in the nucleus.</text>
</comment>
<comment type="subcellular location">
    <subcellularLocation>
        <location evidence="1">Plastid</location>
        <location evidence="1">Chloroplast thylakoid membrane</location>
        <topology evidence="1">Multi-pass membrane protein</topology>
    </subcellularLocation>
</comment>
<comment type="similarity">
    <text evidence="3">Belongs to the complex I subunit 5 family.</text>
</comment>